<comment type="function">
    <text evidence="4">PP2A is the major phosphatase for microtubule-associated proteins (MAPs). PP2A can modulate the activity of phosphorylase B kinase casein kinase 2, mitogen-stimulated S6 kinase, and MAP-2 kinase (By similarity). Key mediator of a quality checkpoint during transcription elongation as part of the Integrator-PP2A (INTAC) complex. The INTAC complex drives premature transcription termination of transcripts that are unfavorably configured for transcriptional elongation: within the INTAC complex, PPP2CA catalyzes dephosphorylation of the C-terminal domain (CTD) of Pol II subunit POLR2A/RPB1 and SUPT5H/SPT5, thereby preventing transcriptional elongation (By similarity).</text>
</comment>
<comment type="catalytic activity">
    <reaction evidence="4">
        <text>O-phospho-L-seryl-[protein] + H2O = L-seryl-[protein] + phosphate</text>
        <dbReference type="Rhea" id="RHEA:20629"/>
        <dbReference type="Rhea" id="RHEA-COMP:9863"/>
        <dbReference type="Rhea" id="RHEA-COMP:11604"/>
        <dbReference type="ChEBI" id="CHEBI:15377"/>
        <dbReference type="ChEBI" id="CHEBI:29999"/>
        <dbReference type="ChEBI" id="CHEBI:43474"/>
        <dbReference type="ChEBI" id="CHEBI:83421"/>
        <dbReference type="EC" id="3.1.3.16"/>
    </reaction>
</comment>
<comment type="catalytic activity">
    <reaction evidence="4">
        <text>O-phospho-L-threonyl-[protein] + H2O = L-threonyl-[protein] + phosphate</text>
        <dbReference type="Rhea" id="RHEA:47004"/>
        <dbReference type="Rhea" id="RHEA-COMP:11060"/>
        <dbReference type="Rhea" id="RHEA-COMP:11605"/>
        <dbReference type="ChEBI" id="CHEBI:15377"/>
        <dbReference type="ChEBI" id="CHEBI:30013"/>
        <dbReference type="ChEBI" id="CHEBI:43474"/>
        <dbReference type="ChEBI" id="CHEBI:61977"/>
        <dbReference type="EC" id="3.1.3.16"/>
    </reaction>
</comment>
<comment type="cofactor">
    <cofactor evidence="4">
        <name>Mn(2+)</name>
        <dbReference type="ChEBI" id="CHEBI:29035"/>
    </cofactor>
    <cofactor evidence="4">
        <name>Fe(3+)</name>
        <dbReference type="ChEBI" id="CHEBI:29034"/>
    </cofactor>
    <cofactor evidence="4">
        <name>Zn(2+)</name>
        <dbReference type="ChEBI" id="CHEBI:29105"/>
    </cofactor>
    <text evidence="4">Binds 2 metal ions per subunit. Can be two manganese ions, or one iron ion and one zinc ion.</text>
</comment>
<comment type="activity regulation">
    <text evidence="4">Inhibited by the interaction between PPP2R2A and ARPP19; this inhibition is enhanced when ARPP19 is phosphorylated (By similarity). Inhibited by the interaction between PPP2R2A and PABIR1/FAM122A (By similarity).</text>
</comment>
<comment type="subunit">
    <text evidence="4">PP2A consists of a common heterodimeric core enzyme, composed of PPP2CA, a 36 kDa catalytic subunit (subunit C), and PPP2R1A, a 65 kDa constant regulatory subunit (PR65 or subunit A), that associates with a variety of regulatory subunits. Proteins that associate with the core dimer include three families of regulatory subunits B (the R2/B/PR55/B55, R3/B''/PR72/PR130/PR59 and R5/B'/B56 families), the 48 kDa variable regulatory subunit, viral proteins, and cell signaling molecules. May indirectly interact with SGOL1, most probably through regulatory B56 subunits (By similarity). Phosphatase component of the Integrator-PP2A (INTAC) complex, composed of the Integrator core complex and protein phosphatase 2A subunits PPP2CA and PPP2R1A (By similarity).</text>
</comment>
<comment type="subcellular location">
    <subcellularLocation>
        <location evidence="4">Cytoplasm</location>
    </subcellularLocation>
    <subcellularLocation>
        <location evidence="4">Nucleus</location>
    </subcellularLocation>
    <subcellularLocation>
        <location evidence="4">Chromosome</location>
    </subcellularLocation>
    <subcellularLocation>
        <location evidence="4">Chromosome</location>
        <location evidence="4">Centromere</location>
    </subcellularLocation>
    <subcellularLocation>
        <location evidence="4">Cytoplasm</location>
        <location evidence="4">Cytoskeleton</location>
        <location evidence="4">Spindle pole</location>
    </subcellularLocation>
    <text evidence="2 4">In prometaphase cells, but not in anaphase cells, localizes at centromeres. During mitosis, also found at spindle poles (By similarity). Recruited to chromatin and transcription pause-release checkpoint via its association with the Integrator complex (By similarity).</text>
</comment>
<comment type="PTM">
    <text evidence="3">Reversibly methyl esterified on Leu-309 by leucine carboxyl methyltransferase 1 (LCMT1) and protein phosphatase methylesterase 1 (PPME1). Carboxyl methylation influences the affinity of the catalytic subunit for the different regulatory subunits, thereby modulating the PP2A holoenzyme's substrate specificity, enzyme activity and cellular localization (By similarity).</text>
</comment>
<comment type="PTM">
    <text evidence="3">Phosphorylation of either threonine (by autophosphorylation-activated protein kinase) or tyrosine results in inactivation of the phosphatase. Auto-dephosphorylation has been suggested as a mechanism for reactivation (By similarity).</text>
</comment>
<comment type="similarity">
    <text evidence="5">Belongs to the PPP phosphatase family. PP-1 subfamily.</text>
</comment>
<sequence length="309" mass="35563">MEEKSFAKELDQWIEQLNECRQLSESQVRSLCEKAKEILTKESNVQEVRCPVTVCGDVHGQFHDLMELFRIGGKSPDTNYLFMGDYVDRGYYSVETVTLLVALKVRYPERITILRGNHESRQITQVYGFYDECLRKYGNANVWKYFTDLFDYLPLTALVDGQIFCLHGGLSPSIDTLDHIRALDRLQEVPHEGPMCDLLWSDPDDRGGWGISPRGAGYTFGQDISETFNHANGLTLVSRAHQLVMEGYNWCHDRNVVTIFSAPNYCYRCGNQAAIMELDDTLKYSFLQFDPAPRRGEPHVTRRTPDYFL</sequence>
<protein>
    <recommendedName>
        <fullName>Serine/threonine-protein phosphatase 2A catalytic subunit alpha isoform</fullName>
        <shortName>PP2A-alpha</shortName>
        <ecNumber>3.1.3.16</ecNumber>
    </recommendedName>
</protein>
<proteinExistence type="evidence at transcript level"/>
<reference key="1">
    <citation type="submission" date="1994-07" db="EMBL/GenBank/DDBJ databases">
        <title>Molecular cloning of cDNA encoding the catalytic subunit of chicken gizzard type 2A protein phosphatase.</title>
        <authorList>
            <person name="Ito M."/>
            <person name="Inoue M."/>
            <person name="Shimizu H."/>
            <person name="Konishi T."/>
            <person name="Kuno T."/>
            <person name="Tanaka C."/>
            <person name="Hartshorne D."/>
            <person name="Nakano T."/>
        </authorList>
    </citation>
    <scope>NUCLEOTIDE SEQUENCE [MRNA]</scope>
    <source>
        <tissue>Gizzard</tissue>
    </source>
</reference>
<gene>
    <name type="primary">PPP2CA</name>
</gene>
<keyword id="KW-0137">Centromere</keyword>
<keyword id="KW-0158">Chromosome</keyword>
<keyword id="KW-0963">Cytoplasm</keyword>
<keyword id="KW-0206">Cytoskeleton</keyword>
<keyword id="KW-0378">Hydrolase</keyword>
<keyword id="KW-0408">Iron</keyword>
<keyword id="KW-0464">Manganese</keyword>
<keyword id="KW-0479">Metal-binding</keyword>
<keyword id="KW-0488">Methylation</keyword>
<keyword id="KW-0539">Nucleus</keyword>
<keyword id="KW-0597">Phosphoprotein</keyword>
<keyword id="KW-0904">Protein phosphatase</keyword>
<keyword id="KW-1185">Reference proteome</keyword>
<keyword id="KW-0862">Zinc</keyword>
<dbReference type="EC" id="3.1.3.16"/>
<dbReference type="EMBL" id="D17531">
    <property type="protein sequence ID" value="BAA04481.1"/>
    <property type="molecule type" value="mRNA"/>
</dbReference>
<dbReference type="RefSeq" id="NP_990455.1">
    <property type="nucleotide sequence ID" value="NM_205124.1"/>
</dbReference>
<dbReference type="SMR" id="P48463"/>
<dbReference type="BioGRID" id="676291">
    <property type="interactions" value="2"/>
</dbReference>
<dbReference type="FunCoup" id="P48463">
    <property type="interactions" value="2820"/>
</dbReference>
<dbReference type="IntAct" id="P48463">
    <property type="interactions" value="1"/>
</dbReference>
<dbReference type="STRING" id="9031.ENSGALP00000016689"/>
<dbReference type="PaxDb" id="9031-ENSGALP00000016689"/>
<dbReference type="GeneID" id="396021"/>
<dbReference type="KEGG" id="gga:396021"/>
<dbReference type="CTD" id="5516"/>
<dbReference type="VEuPathDB" id="HostDB:geneid_396021"/>
<dbReference type="eggNOG" id="KOG0371">
    <property type="taxonomic scope" value="Eukaryota"/>
</dbReference>
<dbReference type="HOGENOM" id="CLU_004962_0_5_1"/>
<dbReference type="InParanoid" id="P48463"/>
<dbReference type="OMA" id="YRCENQA"/>
<dbReference type="OrthoDB" id="1930084at2759"/>
<dbReference type="PhylomeDB" id="P48463"/>
<dbReference type="TreeFam" id="TF105559"/>
<dbReference type="Reactome" id="R-GGA-141444">
    <property type="pathway name" value="Amplification of signal from unattached kinetochores via a MAD2 inhibitory signal"/>
</dbReference>
<dbReference type="Reactome" id="R-GGA-195253">
    <property type="pathway name" value="Degradation of beta-catenin by the destruction complex"/>
</dbReference>
<dbReference type="Reactome" id="R-GGA-196299">
    <property type="pathway name" value="Beta-catenin phosphorylation cascade"/>
</dbReference>
<dbReference type="Reactome" id="R-GGA-2467813">
    <property type="pathway name" value="Separation of Sister Chromatids"/>
</dbReference>
<dbReference type="Reactome" id="R-GGA-2500257">
    <property type="pathway name" value="Resolution of Sister Chromatid Cohesion"/>
</dbReference>
<dbReference type="Reactome" id="R-GGA-389356">
    <property type="pathway name" value="Co-stimulation by CD28"/>
</dbReference>
<dbReference type="Reactome" id="R-GGA-389513">
    <property type="pathway name" value="Co-inhibition by CTLA4"/>
</dbReference>
<dbReference type="Reactome" id="R-GGA-5663220">
    <property type="pathway name" value="RHO GTPases Activate Formins"/>
</dbReference>
<dbReference type="Reactome" id="R-GGA-9648025">
    <property type="pathway name" value="EML4 and NUDC in mitotic spindle formation"/>
</dbReference>
<dbReference type="PRO" id="PR:P48463"/>
<dbReference type="Proteomes" id="UP000000539">
    <property type="component" value="Chromosome 4"/>
</dbReference>
<dbReference type="Bgee" id="ENSGALG00000010273">
    <property type="expression patterns" value="Expressed in cerebellum and 12 other cell types or tissues"/>
</dbReference>
<dbReference type="GO" id="GO:0000785">
    <property type="term" value="C:chromatin"/>
    <property type="evidence" value="ECO:0000250"/>
    <property type="project" value="UniProtKB"/>
</dbReference>
<dbReference type="GO" id="GO:0000775">
    <property type="term" value="C:chromosome, centromeric region"/>
    <property type="evidence" value="ECO:0007669"/>
    <property type="project" value="UniProtKB-SubCell"/>
</dbReference>
<dbReference type="GO" id="GO:0005829">
    <property type="term" value="C:cytosol"/>
    <property type="evidence" value="ECO:0000318"/>
    <property type="project" value="GO_Central"/>
</dbReference>
<dbReference type="GO" id="GO:0160232">
    <property type="term" value="C:INTAC complex"/>
    <property type="evidence" value="ECO:0000250"/>
    <property type="project" value="UniProtKB"/>
</dbReference>
<dbReference type="GO" id="GO:0005634">
    <property type="term" value="C:nucleus"/>
    <property type="evidence" value="ECO:0000250"/>
    <property type="project" value="UniProtKB"/>
</dbReference>
<dbReference type="GO" id="GO:0000922">
    <property type="term" value="C:spindle pole"/>
    <property type="evidence" value="ECO:0007669"/>
    <property type="project" value="UniProtKB-SubCell"/>
</dbReference>
<dbReference type="GO" id="GO:0046872">
    <property type="term" value="F:metal ion binding"/>
    <property type="evidence" value="ECO:0007669"/>
    <property type="project" value="UniProtKB-KW"/>
</dbReference>
<dbReference type="GO" id="GO:0046982">
    <property type="term" value="F:protein heterodimerization activity"/>
    <property type="evidence" value="ECO:0000250"/>
    <property type="project" value="UniProtKB"/>
</dbReference>
<dbReference type="GO" id="GO:0004722">
    <property type="term" value="F:protein serine/threonine phosphatase activity"/>
    <property type="evidence" value="ECO:0000250"/>
    <property type="project" value="UniProtKB"/>
</dbReference>
<dbReference type="GO" id="GO:0180006">
    <property type="term" value="F:RNA polymerase II CTD heptapeptide repeat S2 phosphatase activity"/>
    <property type="evidence" value="ECO:0000250"/>
    <property type="project" value="UniProtKB"/>
</dbReference>
<dbReference type="GO" id="GO:0180007">
    <property type="term" value="F:RNA polymerase II CTD heptapeptide repeat S5 phosphatase activity"/>
    <property type="evidence" value="ECO:0000250"/>
    <property type="project" value="UniProtKB"/>
</dbReference>
<dbReference type="GO" id="GO:0180008">
    <property type="term" value="F:RNA polymerase II CTD heptapeptide repeat S7 phosphatase activity"/>
    <property type="evidence" value="ECO:0000250"/>
    <property type="project" value="UniProtKB"/>
</dbReference>
<dbReference type="GO" id="GO:0000278">
    <property type="term" value="P:mitotic cell cycle"/>
    <property type="evidence" value="ECO:0000318"/>
    <property type="project" value="GO_Central"/>
</dbReference>
<dbReference type="GO" id="GO:0035331">
    <property type="term" value="P:negative regulation of hippo signaling"/>
    <property type="evidence" value="ECO:0000250"/>
    <property type="project" value="UniProtKB"/>
</dbReference>
<dbReference type="GO" id="GO:1900227">
    <property type="term" value="P:positive regulation of NLRP3 inflammasome complex assembly"/>
    <property type="evidence" value="ECO:0000250"/>
    <property type="project" value="UniProtKB"/>
</dbReference>
<dbReference type="GO" id="GO:0160240">
    <property type="term" value="P:RNA polymerase II transcription initiation surveillance"/>
    <property type="evidence" value="ECO:0000250"/>
    <property type="project" value="UniProtKB"/>
</dbReference>
<dbReference type="CDD" id="cd07415">
    <property type="entry name" value="MPP_PP2A_PP4_PP6"/>
    <property type="match status" value="1"/>
</dbReference>
<dbReference type="FunFam" id="3.60.21.10:FF:000003">
    <property type="entry name" value="Serine/threonine-protein phosphatase"/>
    <property type="match status" value="1"/>
</dbReference>
<dbReference type="Gene3D" id="3.60.21.10">
    <property type="match status" value="1"/>
</dbReference>
<dbReference type="InterPro" id="IPR004843">
    <property type="entry name" value="Calcineurin-like_PHP_ApaH"/>
</dbReference>
<dbReference type="InterPro" id="IPR029052">
    <property type="entry name" value="Metallo-depent_PP-like"/>
</dbReference>
<dbReference type="InterPro" id="IPR047129">
    <property type="entry name" value="PPA2-like"/>
</dbReference>
<dbReference type="InterPro" id="IPR006186">
    <property type="entry name" value="Ser/Thr-sp_prot-phosphatase"/>
</dbReference>
<dbReference type="PANTHER" id="PTHR45619">
    <property type="entry name" value="SERINE/THREONINE-PROTEIN PHOSPHATASE PP2A-RELATED"/>
    <property type="match status" value="1"/>
</dbReference>
<dbReference type="Pfam" id="PF00149">
    <property type="entry name" value="Metallophos"/>
    <property type="match status" value="1"/>
</dbReference>
<dbReference type="PRINTS" id="PR00114">
    <property type="entry name" value="STPHPHTASE"/>
</dbReference>
<dbReference type="SMART" id="SM00156">
    <property type="entry name" value="PP2Ac"/>
    <property type="match status" value="1"/>
</dbReference>
<dbReference type="SUPFAM" id="SSF56300">
    <property type="entry name" value="Metallo-dependent phosphatases"/>
    <property type="match status" value="1"/>
</dbReference>
<dbReference type="PROSITE" id="PS00125">
    <property type="entry name" value="SER_THR_PHOSPHATASE"/>
    <property type="match status" value="1"/>
</dbReference>
<evidence type="ECO:0000250" key="1">
    <source>
        <dbReference type="UniProtKB" id="P36873"/>
    </source>
</evidence>
<evidence type="ECO:0000250" key="2">
    <source>
        <dbReference type="UniProtKB" id="P63330"/>
    </source>
</evidence>
<evidence type="ECO:0000250" key="3">
    <source>
        <dbReference type="UniProtKB" id="P67774"/>
    </source>
</evidence>
<evidence type="ECO:0000250" key="4">
    <source>
        <dbReference type="UniProtKB" id="P67775"/>
    </source>
</evidence>
<evidence type="ECO:0000305" key="5"/>
<organism>
    <name type="scientific">Gallus gallus</name>
    <name type="common">Chicken</name>
    <dbReference type="NCBI Taxonomy" id="9031"/>
    <lineage>
        <taxon>Eukaryota</taxon>
        <taxon>Metazoa</taxon>
        <taxon>Chordata</taxon>
        <taxon>Craniata</taxon>
        <taxon>Vertebrata</taxon>
        <taxon>Euteleostomi</taxon>
        <taxon>Archelosauria</taxon>
        <taxon>Archosauria</taxon>
        <taxon>Dinosauria</taxon>
        <taxon>Saurischia</taxon>
        <taxon>Theropoda</taxon>
        <taxon>Coelurosauria</taxon>
        <taxon>Aves</taxon>
        <taxon>Neognathae</taxon>
        <taxon>Galloanserae</taxon>
        <taxon>Galliformes</taxon>
        <taxon>Phasianidae</taxon>
        <taxon>Phasianinae</taxon>
        <taxon>Gallus</taxon>
    </lineage>
</organism>
<feature type="chain" id="PRO_0000058844" description="Serine/threonine-protein phosphatase 2A catalytic subunit alpha isoform">
    <location>
        <begin position="1"/>
        <end position="309"/>
    </location>
</feature>
<feature type="active site" description="Proton donor" evidence="1">
    <location>
        <position position="118"/>
    </location>
</feature>
<feature type="binding site" evidence="4">
    <location>
        <position position="57"/>
    </location>
    <ligand>
        <name>Mn(2+)</name>
        <dbReference type="ChEBI" id="CHEBI:29035"/>
        <label>1</label>
    </ligand>
</feature>
<feature type="binding site" evidence="4">
    <location>
        <position position="57"/>
    </location>
    <ligand>
        <name>Zn(2+)</name>
        <dbReference type="ChEBI" id="CHEBI:29105"/>
    </ligand>
</feature>
<feature type="binding site" evidence="4">
    <location>
        <position position="59"/>
    </location>
    <ligand>
        <name>Mn(2+)</name>
        <dbReference type="ChEBI" id="CHEBI:29035"/>
        <label>1</label>
    </ligand>
</feature>
<feature type="binding site" evidence="4">
    <location>
        <position position="59"/>
    </location>
    <ligand>
        <name>Zn(2+)</name>
        <dbReference type="ChEBI" id="CHEBI:29105"/>
    </ligand>
</feature>
<feature type="binding site" evidence="4">
    <location>
        <position position="85"/>
    </location>
    <ligand>
        <name>Fe(3+)</name>
        <dbReference type="ChEBI" id="CHEBI:29034"/>
    </ligand>
</feature>
<feature type="binding site" evidence="4">
    <location>
        <position position="85"/>
    </location>
    <ligand>
        <name>Mn(2+)</name>
        <dbReference type="ChEBI" id="CHEBI:29035"/>
        <label>1</label>
    </ligand>
</feature>
<feature type="binding site" evidence="4">
    <location>
        <position position="85"/>
    </location>
    <ligand>
        <name>Mn(2+)</name>
        <dbReference type="ChEBI" id="CHEBI:29035"/>
        <label>2</label>
    </ligand>
</feature>
<feature type="binding site" evidence="4">
    <location>
        <position position="85"/>
    </location>
    <ligand>
        <name>Zn(2+)</name>
        <dbReference type="ChEBI" id="CHEBI:29105"/>
    </ligand>
</feature>
<feature type="binding site" evidence="4">
    <location>
        <position position="117"/>
    </location>
    <ligand>
        <name>Fe(3+)</name>
        <dbReference type="ChEBI" id="CHEBI:29034"/>
    </ligand>
</feature>
<feature type="binding site" evidence="4">
    <location>
        <position position="117"/>
    </location>
    <ligand>
        <name>Mn(2+)</name>
        <dbReference type="ChEBI" id="CHEBI:29035"/>
        <label>2</label>
    </ligand>
</feature>
<feature type="binding site" evidence="4">
    <location>
        <position position="167"/>
    </location>
    <ligand>
        <name>Fe(3+)</name>
        <dbReference type="ChEBI" id="CHEBI:29034"/>
    </ligand>
</feature>
<feature type="binding site" evidence="4">
    <location>
        <position position="167"/>
    </location>
    <ligand>
        <name>Mn(2+)</name>
        <dbReference type="ChEBI" id="CHEBI:29035"/>
        <label>2</label>
    </ligand>
</feature>
<feature type="binding site" evidence="4">
    <location>
        <position position="241"/>
    </location>
    <ligand>
        <name>Fe(3+)</name>
        <dbReference type="ChEBI" id="CHEBI:29034"/>
    </ligand>
</feature>
<feature type="binding site" evidence="4">
    <location>
        <position position="241"/>
    </location>
    <ligand>
        <name>Mn(2+)</name>
        <dbReference type="ChEBI" id="CHEBI:29035"/>
        <label>2</label>
    </ligand>
</feature>
<feature type="modified residue" description="Phosphotyrosine" evidence="2">
    <location>
        <position position="307"/>
    </location>
</feature>
<feature type="modified residue" description="Leucine methyl ester" evidence="2">
    <location>
        <position position="309"/>
    </location>
</feature>
<accession>P48463</accession>
<name>PP2AA_CHICK</name>